<comment type="function">
    <text evidence="1">Binds as a heterodimer with protein bS6 to the central domain of the 16S rRNA, where it helps stabilize the platform of the 30S subunit.</text>
</comment>
<comment type="subunit">
    <text evidence="1">Part of the 30S ribosomal subunit. Forms a tight heterodimer with protein bS6.</text>
</comment>
<comment type="similarity">
    <text evidence="1">Belongs to the bacterial ribosomal protein bS18 family.</text>
</comment>
<proteinExistence type="inferred from homology"/>
<gene>
    <name evidence="1" type="primary">rpsR1</name>
    <name type="synonym">rpsR</name>
    <name type="ordered locus">MAP_0069</name>
</gene>
<protein>
    <recommendedName>
        <fullName evidence="1">Small ribosomal subunit protein bS18A</fullName>
    </recommendedName>
    <alternativeName>
        <fullName evidence="2">30S ribosomal protein S18 1</fullName>
    </alternativeName>
</protein>
<organism>
    <name type="scientific">Mycolicibacterium paratuberculosis (strain ATCC BAA-968 / K-10)</name>
    <name type="common">Mycobacterium paratuberculosis</name>
    <dbReference type="NCBI Taxonomy" id="262316"/>
    <lineage>
        <taxon>Bacteria</taxon>
        <taxon>Bacillati</taxon>
        <taxon>Actinomycetota</taxon>
        <taxon>Actinomycetes</taxon>
        <taxon>Mycobacteriales</taxon>
        <taxon>Mycobacteriaceae</taxon>
        <taxon>Mycobacterium</taxon>
        <taxon>Mycobacterium avium complex (MAC)</taxon>
    </lineage>
</organism>
<keyword id="KW-1185">Reference proteome</keyword>
<keyword id="KW-0687">Ribonucleoprotein</keyword>
<keyword id="KW-0689">Ribosomal protein</keyword>
<keyword id="KW-0694">RNA-binding</keyword>
<keyword id="KW-0699">rRNA-binding</keyword>
<name>RS181_MYCPA</name>
<dbReference type="EMBL" id="AE016958">
    <property type="protein sequence ID" value="AAS02386.1"/>
    <property type="molecule type" value="Genomic_DNA"/>
</dbReference>
<dbReference type="RefSeq" id="WP_003874730.1">
    <property type="nucleotide sequence ID" value="NZ_CP106873.1"/>
</dbReference>
<dbReference type="SMR" id="Q744X6"/>
<dbReference type="STRING" id="262316.MAP_0069"/>
<dbReference type="GeneID" id="77299268"/>
<dbReference type="KEGG" id="mpa:MAP_0069"/>
<dbReference type="eggNOG" id="COG0238">
    <property type="taxonomic scope" value="Bacteria"/>
</dbReference>
<dbReference type="HOGENOM" id="CLU_148710_2_2_11"/>
<dbReference type="Proteomes" id="UP000000580">
    <property type="component" value="Chromosome"/>
</dbReference>
<dbReference type="GO" id="GO:0022627">
    <property type="term" value="C:cytosolic small ribosomal subunit"/>
    <property type="evidence" value="ECO:0007669"/>
    <property type="project" value="TreeGrafter"/>
</dbReference>
<dbReference type="GO" id="GO:0070181">
    <property type="term" value="F:small ribosomal subunit rRNA binding"/>
    <property type="evidence" value="ECO:0007669"/>
    <property type="project" value="TreeGrafter"/>
</dbReference>
<dbReference type="GO" id="GO:0003735">
    <property type="term" value="F:structural constituent of ribosome"/>
    <property type="evidence" value="ECO:0007669"/>
    <property type="project" value="InterPro"/>
</dbReference>
<dbReference type="GO" id="GO:0006412">
    <property type="term" value="P:translation"/>
    <property type="evidence" value="ECO:0007669"/>
    <property type="project" value="UniProtKB-UniRule"/>
</dbReference>
<dbReference type="FunFam" id="4.10.640.10:FF:000004">
    <property type="entry name" value="30S ribosomal protein S18"/>
    <property type="match status" value="1"/>
</dbReference>
<dbReference type="Gene3D" id="4.10.640.10">
    <property type="entry name" value="Ribosomal protein S18"/>
    <property type="match status" value="1"/>
</dbReference>
<dbReference type="HAMAP" id="MF_00270">
    <property type="entry name" value="Ribosomal_bS18"/>
    <property type="match status" value="1"/>
</dbReference>
<dbReference type="InterPro" id="IPR001648">
    <property type="entry name" value="Ribosomal_bS18"/>
</dbReference>
<dbReference type="InterPro" id="IPR018275">
    <property type="entry name" value="Ribosomal_bS18_CS"/>
</dbReference>
<dbReference type="InterPro" id="IPR036870">
    <property type="entry name" value="Ribosomal_bS18_sf"/>
</dbReference>
<dbReference type="NCBIfam" id="TIGR00165">
    <property type="entry name" value="S18"/>
    <property type="match status" value="1"/>
</dbReference>
<dbReference type="PANTHER" id="PTHR13479">
    <property type="entry name" value="30S RIBOSOMAL PROTEIN S18"/>
    <property type="match status" value="1"/>
</dbReference>
<dbReference type="PANTHER" id="PTHR13479:SF62">
    <property type="entry name" value="SMALL RIBOSOMAL SUBUNIT PROTEIN BS18A"/>
    <property type="match status" value="1"/>
</dbReference>
<dbReference type="Pfam" id="PF01084">
    <property type="entry name" value="Ribosomal_S18"/>
    <property type="match status" value="1"/>
</dbReference>
<dbReference type="PRINTS" id="PR00974">
    <property type="entry name" value="RIBOSOMALS18"/>
</dbReference>
<dbReference type="SUPFAM" id="SSF46911">
    <property type="entry name" value="Ribosomal protein S18"/>
    <property type="match status" value="1"/>
</dbReference>
<dbReference type="PROSITE" id="PS00057">
    <property type="entry name" value="RIBOSOMAL_S18"/>
    <property type="match status" value="1"/>
</dbReference>
<accession>Q744X6</accession>
<evidence type="ECO:0000255" key="1">
    <source>
        <dbReference type="HAMAP-Rule" id="MF_00270"/>
    </source>
</evidence>
<evidence type="ECO:0000305" key="2"/>
<feature type="chain" id="PRO_0000111185" description="Small ribosomal subunit protein bS18A">
    <location>
        <begin position="1"/>
        <end position="84"/>
    </location>
</feature>
<sequence>MAKSNKRRPAPEKPVKARKCVFCAKKDQAIDYKDTALLRTYISERGKIRARRVTGNCVQHQRDIAIAVKNAREVALLPFTSSAR</sequence>
<reference key="1">
    <citation type="journal article" date="2005" name="Proc. Natl. Acad. Sci. U.S.A.">
        <title>The complete genome sequence of Mycobacterium avium subspecies paratuberculosis.</title>
        <authorList>
            <person name="Li L."/>
            <person name="Bannantine J.P."/>
            <person name="Zhang Q."/>
            <person name="Amonsin A."/>
            <person name="May B.J."/>
            <person name="Alt D."/>
            <person name="Banerji N."/>
            <person name="Kanjilal S."/>
            <person name="Kapur V."/>
        </authorList>
    </citation>
    <scope>NUCLEOTIDE SEQUENCE [LARGE SCALE GENOMIC DNA]</scope>
    <source>
        <strain>ATCC BAA-968 / K-10</strain>
    </source>
</reference>